<accession>Q24523</accession>
<accession>D4G7A9</accession>
<accession>Q0E8R0</accession>
<accession>Q9VK78</accession>
<accession>Q9VK79</accession>
<comment type="function">
    <text evidence="2">Probable transcription factor required for peripheral nervous system morphogenesis, eye development and oogenesis. May be required for the transmission of the dpp signal and for a morphogenetic movement of the medulla in the brain that reorients the second optic lobe relative to the first. Plays a role in determining proper dorsal cell fates leading to the formation of the dorsal appendages.</text>
</comment>
<comment type="subcellular location">
    <subcellularLocation>
        <location evidence="2">Cytoplasm</location>
    </subcellularLocation>
    <subcellularLocation>
        <location evidence="2">Nucleus</location>
    </subcellularLocation>
</comment>
<comment type="alternative products">
    <event type="alternative splicing"/>
    <isoform>
        <id>Q24523-4</id>
        <name>G</name>
        <sequence type="displayed"/>
    </isoform>
    <isoform>
        <id>Q24523-1</id>
        <name>Class 2</name>
        <name>A</name>
        <sequence type="described" ref="VSP_043733 VSP_043734"/>
    </isoform>
    <isoform>
        <id>Q24523-3</id>
        <name>F</name>
        <sequence type="described" ref="VSP_043734"/>
    </isoform>
    <isoform>
        <id>Q24522-1</id>
        <name>Class 1</name>
        <name>B</name>
        <sequence type="external"/>
    </isoform>
    <isoform>
        <id>Q24522-2</id>
        <id>Q24523-2</id>
        <name>Class 3</name>
        <name>C</name>
        <sequence type="external"/>
    </isoform>
    <isoform>
        <id>Q24522-3</id>
        <name>D</name>
        <name>H</name>
        <sequence type="external"/>
    </isoform>
    <isoform>
        <id>Q24522-4</id>
        <name>E</name>
        <sequence type="external"/>
    </isoform>
</comment>
<comment type="similarity">
    <text evidence="5">Belongs to the TSC-22/Dip/Bun family.</text>
</comment>
<comment type="sequence caution" evidence="5">
    <conflict type="erroneous initiation">
        <sequence resource="EMBL-CDS" id="AAC41608"/>
    </conflict>
    <text>Extended N-terminus.</text>
</comment>
<name>BUN2_DROME</name>
<keyword id="KW-0025">Alternative splicing</keyword>
<keyword id="KW-0963">Cytoplasm</keyword>
<keyword id="KW-0539">Nucleus</keyword>
<keyword id="KW-1185">Reference proteome</keyword>
<keyword id="KW-0804">Transcription</keyword>
<keyword id="KW-0805">Transcription regulation</keyword>
<feature type="chain" id="PRO_0000219377" description="Protein bunched, class 2/F/G isoform">
    <location>
        <begin position="1"/>
        <end position="1331"/>
    </location>
</feature>
<feature type="region of interest" description="Disordered" evidence="1">
    <location>
        <begin position="1"/>
        <end position="35"/>
    </location>
</feature>
<feature type="region of interest" description="Disordered" evidence="1">
    <location>
        <begin position="101"/>
        <end position="317"/>
    </location>
</feature>
<feature type="region of interest" description="Disordered" evidence="1">
    <location>
        <begin position="429"/>
        <end position="471"/>
    </location>
</feature>
<feature type="region of interest" description="Disordered" evidence="1">
    <location>
        <begin position="553"/>
        <end position="582"/>
    </location>
</feature>
<feature type="region of interest" description="Disordered" evidence="1">
    <location>
        <begin position="597"/>
        <end position="665"/>
    </location>
</feature>
<feature type="region of interest" description="Disordered" evidence="1">
    <location>
        <begin position="681"/>
        <end position="750"/>
    </location>
</feature>
<feature type="region of interest" description="Disordered" evidence="1">
    <location>
        <begin position="814"/>
        <end position="853"/>
    </location>
</feature>
<feature type="region of interest" description="Disordered" evidence="1">
    <location>
        <begin position="908"/>
        <end position="950"/>
    </location>
</feature>
<feature type="region of interest" description="Leucine-zipper">
    <location>
        <begin position="1194"/>
        <end position="1215"/>
    </location>
</feature>
<feature type="compositionally biased region" description="Polar residues" evidence="1">
    <location>
        <begin position="13"/>
        <end position="31"/>
    </location>
</feature>
<feature type="compositionally biased region" description="Low complexity" evidence="1">
    <location>
        <begin position="106"/>
        <end position="165"/>
    </location>
</feature>
<feature type="compositionally biased region" description="Low complexity" evidence="1">
    <location>
        <begin position="175"/>
        <end position="190"/>
    </location>
</feature>
<feature type="compositionally biased region" description="Basic residues" evidence="1">
    <location>
        <begin position="191"/>
        <end position="212"/>
    </location>
</feature>
<feature type="compositionally biased region" description="Gly residues" evidence="1">
    <location>
        <begin position="236"/>
        <end position="248"/>
    </location>
</feature>
<feature type="compositionally biased region" description="Polar residues" evidence="1">
    <location>
        <begin position="263"/>
        <end position="273"/>
    </location>
</feature>
<feature type="compositionally biased region" description="Acidic residues" evidence="1">
    <location>
        <begin position="285"/>
        <end position="294"/>
    </location>
</feature>
<feature type="compositionally biased region" description="Basic and acidic residues" evidence="1">
    <location>
        <begin position="295"/>
        <end position="306"/>
    </location>
</feature>
<feature type="compositionally biased region" description="Polar residues" evidence="1">
    <location>
        <begin position="432"/>
        <end position="443"/>
    </location>
</feature>
<feature type="compositionally biased region" description="Low complexity" evidence="1">
    <location>
        <begin position="553"/>
        <end position="580"/>
    </location>
</feature>
<feature type="compositionally biased region" description="Low complexity" evidence="1">
    <location>
        <begin position="614"/>
        <end position="641"/>
    </location>
</feature>
<feature type="compositionally biased region" description="Low complexity" evidence="1">
    <location>
        <begin position="701"/>
        <end position="734"/>
    </location>
</feature>
<feature type="compositionally biased region" description="Polar residues" evidence="1">
    <location>
        <begin position="740"/>
        <end position="750"/>
    </location>
</feature>
<feature type="compositionally biased region" description="Polar residues" evidence="1">
    <location>
        <begin position="917"/>
        <end position="933"/>
    </location>
</feature>
<feature type="splice variant" id="VSP_043733" description="In isoform Class 2." evidence="3">
    <original>M</original>
    <variation>MAENQSAASKDSGHQQQHQQQQQQQHQQHQQPLATTSVTAASTTSVLANQSPTNSQASSPENSQEALPLLRRQQSAAAATVAAAAATVAATTSGTSQQQQQQHRNSISNM</variation>
    <location>
        <position position="1"/>
    </location>
</feature>
<feature type="splice variant" id="VSP_043734" description="In isoform Class 2 and isoform F." evidence="3 4">
    <location>
        <begin position="926"/>
        <end position="1159"/>
    </location>
</feature>
<feature type="sequence conflict" description="In Ref. 1; AAC41608." evidence="5" ref="1">
    <location>
        <position position="219"/>
    </location>
</feature>
<feature type="sequence conflict" description="In Ref. 4; ADD74346." evidence="5" ref="4">
    <original>A</original>
    <variation>V</variation>
    <location>
        <position position="575"/>
    </location>
</feature>
<feature type="sequence conflict" description="In Ref. 1; AAC41608 and 4; ADD74346." evidence="5" ref="1 4">
    <original>Q</original>
    <variation>QQQ</variation>
    <location>
        <position position="691"/>
    </location>
</feature>
<feature type="sequence conflict" description="In Ref. 1; AAC41608." evidence="5" ref="1">
    <original>TS</original>
    <variation>QQVTSAA</variation>
    <location>
        <begin position="1314"/>
        <end position="1315"/>
    </location>
</feature>
<feature type="sequence conflict" description="In Ref. 4; ADD74346." evidence="5" ref="4">
    <original>A</original>
    <variation>AAA</variation>
    <location>
        <position position="1321"/>
    </location>
</feature>
<evidence type="ECO:0000256" key="1">
    <source>
        <dbReference type="SAM" id="MobiDB-lite"/>
    </source>
</evidence>
<evidence type="ECO:0000269" key="2">
    <source>
    </source>
</evidence>
<evidence type="ECO:0000303" key="3">
    <source>
    </source>
</evidence>
<evidence type="ECO:0000303" key="4">
    <source ref="4"/>
</evidence>
<evidence type="ECO:0000305" key="5"/>
<proteinExistence type="evidence at transcript level"/>
<protein>
    <recommendedName>
        <fullName>Protein bunched, class 2/F/G isoform</fullName>
    </recommendedName>
    <alternativeName>
        <fullName>Protein shortsighted</fullName>
    </alternativeName>
</protein>
<dbReference type="EMBL" id="L42512">
    <property type="protein sequence ID" value="AAC41608.1"/>
    <property type="status" value="ALT_INIT"/>
    <property type="molecule type" value="mRNA"/>
</dbReference>
<dbReference type="EMBL" id="AE014134">
    <property type="protein sequence ID" value="AAF53201.2"/>
    <property type="molecule type" value="Genomic_DNA"/>
</dbReference>
<dbReference type="EMBL" id="AE014134">
    <property type="protein sequence ID" value="ABI31311.2"/>
    <property type="molecule type" value="Genomic_DNA"/>
</dbReference>
<dbReference type="EMBL" id="AE014134">
    <property type="protein sequence ID" value="ABI31313.1"/>
    <property type="molecule type" value="Genomic_DNA"/>
</dbReference>
<dbReference type="EMBL" id="BT122061">
    <property type="protein sequence ID" value="ADD74346.1"/>
    <property type="molecule type" value="mRNA"/>
</dbReference>
<dbReference type="PIR" id="T13804">
    <property type="entry name" value="T13804"/>
</dbReference>
<dbReference type="RefSeq" id="NP_001036357.2">
    <molecule id="Q24523-4"/>
    <property type="nucleotide sequence ID" value="NM_001042892.3"/>
</dbReference>
<dbReference type="RefSeq" id="NP_001036359.1">
    <molecule id="Q24523-3"/>
    <property type="nucleotide sequence ID" value="NM_001042894.2"/>
</dbReference>
<dbReference type="RefSeq" id="NP_525103.2">
    <molecule id="Q24523-1"/>
    <property type="nucleotide sequence ID" value="NM_080364.4"/>
</dbReference>
<dbReference type="SMR" id="Q24523"/>
<dbReference type="BioGRID" id="60711">
    <property type="interactions" value="33"/>
</dbReference>
<dbReference type="FunCoup" id="Q24523">
    <property type="interactions" value="274"/>
</dbReference>
<dbReference type="IntAct" id="Q24523">
    <property type="interactions" value="2"/>
</dbReference>
<dbReference type="STRING" id="7227.FBpp0288933"/>
<dbReference type="GlyGen" id="Q24523">
    <property type="glycosylation" value="4 sites"/>
</dbReference>
<dbReference type="PaxDb" id="7227-FBpp0288933"/>
<dbReference type="DNASU" id="34665"/>
<dbReference type="EnsemblMetazoa" id="FBtr0299658">
    <molecule id="Q24523-4"/>
    <property type="protein sequence ID" value="FBpp0288933"/>
    <property type="gene ID" value="FBgn0259176"/>
</dbReference>
<dbReference type="EnsemblMetazoa" id="FBtr0300521">
    <molecule id="Q24523-1"/>
    <property type="protein sequence ID" value="FBpp0289748"/>
    <property type="gene ID" value="FBgn0259176"/>
</dbReference>
<dbReference type="EnsemblMetazoa" id="FBtr0300523">
    <molecule id="Q24523-3"/>
    <property type="protein sequence ID" value="FBpp0289750"/>
    <property type="gene ID" value="FBgn0259176"/>
</dbReference>
<dbReference type="GeneID" id="34665"/>
<dbReference type="KEGG" id="dme:Dmel_CG42281"/>
<dbReference type="AGR" id="FB:FBgn0259176"/>
<dbReference type="CTD" id="34665"/>
<dbReference type="FlyBase" id="FBgn0259176">
    <property type="gene designation" value="bun"/>
</dbReference>
<dbReference type="VEuPathDB" id="VectorBase:FBgn0259176"/>
<dbReference type="eggNOG" id="KOG4797">
    <property type="taxonomic scope" value="Eukaryota"/>
</dbReference>
<dbReference type="GeneTree" id="ENSGT00940000168943"/>
<dbReference type="InParanoid" id="Q24523"/>
<dbReference type="OMA" id="EDSGHQQ"/>
<dbReference type="OrthoDB" id="8961796at2759"/>
<dbReference type="PhylomeDB" id="Q24523"/>
<dbReference type="BioGRID-ORCS" id="34665">
    <property type="hits" value="1 hit in 3 CRISPR screens"/>
</dbReference>
<dbReference type="ChiTaRS" id="bun">
    <property type="organism name" value="fly"/>
</dbReference>
<dbReference type="GenomeRNAi" id="34665"/>
<dbReference type="Proteomes" id="UP000000803">
    <property type="component" value="Chromosome 2L"/>
</dbReference>
<dbReference type="Bgee" id="FBgn0259176">
    <property type="expression patterns" value="Expressed in adult Malpighian tubule tiny cell (Drosophila) in Malpighian tubule and 301 other cell types or tissues"/>
</dbReference>
<dbReference type="ExpressionAtlas" id="Q24523">
    <property type="expression patterns" value="baseline and differential"/>
</dbReference>
<dbReference type="GO" id="GO:0005829">
    <property type="term" value="C:cytosol"/>
    <property type="evidence" value="ECO:0000314"/>
    <property type="project" value="FlyBase"/>
</dbReference>
<dbReference type="GO" id="GO:0005634">
    <property type="term" value="C:nucleus"/>
    <property type="evidence" value="ECO:0000318"/>
    <property type="project" value="GO_Central"/>
</dbReference>
<dbReference type="GO" id="GO:0042803">
    <property type="term" value="F:protein homodimerization activity"/>
    <property type="evidence" value="ECO:0000250"/>
    <property type="project" value="FlyBase"/>
</dbReference>
<dbReference type="GO" id="GO:0007304">
    <property type="term" value="P:chorion-containing eggshell formation"/>
    <property type="evidence" value="ECO:0000315"/>
    <property type="project" value="FlyBase"/>
</dbReference>
<dbReference type="GO" id="GO:0001751">
    <property type="term" value="P:compound eye photoreceptor cell differentiation"/>
    <property type="evidence" value="ECO:0000315"/>
    <property type="project" value="FlyBase"/>
</dbReference>
<dbReference type="GO" id="GO:0008340">
    <property type="term" value="P:determination of adult lifespan"/>
    <property type="evidence" value="ECO:0000315"/>
    <property type="project" value="FlyBase"/>
</dbReference>
<dbReference type="GO" id="GO:0046843">
    <property type="term" value="P:dorsal appendage formation"/>
    <property type="evidence" value="ECO:0000315"/>
    <property type="project" value="FlyBase"/>
</dbReference>
<dbReference type="GO" id="GO:0007297">
    <property type="term" value="P:follicle cell of egg chamber migration"/>
    <property type="evidence" value="ECO:0000315"/>
    <property type="project" value="FlyBase"/>
</dbReference>
<dbReference type="GO" id="GO:0036335">
    <property type="term" value="P:intestinal stem cell homeostasis"/>
    <property type="evidence" value="ECO:0000315"/>
    <property type="project" value="FlyBase"/>
</dbReference>
<dbReference type="GO" id="GO:0016319">
    <property type="term" value="P:mushroom body development"/>
    <property type="evidence" value="ECO:0000315"/>
    <property type="project" value="FlyBase"/>
</dbReference>
<dbReference type="GO" id="GO:0043066">
    <property type="term" value="P:negative regulation of apoptotic process"/>
    <property type="evidence" value="ECO:0000315"/>
    <property type="project" value="FlyBase"/>
</dbReference>
<dbReference type="GO" id="GO:0009996">
    <property type="term" value="P:negative regulation of cell fate specification"/>
    <property type="evidence" value="ECO:0000315"/>
    <property type="project" value="FlyBase"/>
</dbReference>
<dbReference type="GO" id="GO:0030307">
    <property type="term" value="P:positive regulation of cell growth"/>
    <property type="evidence" value="ECO:0000315"/>
    <property type="project" value="FlyBase"/>
</dbReference>
<dbReference type="GO" id="GO:0008284">
    <property type="term" value="P:positive regulation of cell population proliferation"/>
    <property type="evidence" value="ECO:0000315"/>
    <property type="project" value="FlyBase"/>
</dbReference>
<dbReference type="GO" id="GO:0002052">
    <property type="term" value="P:positive regulation of neuroblast proliferation"/>
    <property type="evidence" value="ECO:0000315"/>
    <property type="project" value="FlyBase"/>
</dbReference>
<dbReference type="GO" id="GO:0006357">
    <property type="term" value="P:regulation of transcription by RNA polymerase II"/>
    <property type="evidence" value="ECO:0007669"/>
    <property type="project" value="InterPro"/>
</dbReference>
<dbReference type="GO" id="GO:0042246">
    <property type="term" value="P:tissue regeneration"/>
    <property type="evidence" value="ECO:0000315"/>
    <property type="project" value="FlyBase"/>
</dbReference>
<dbReference type="CDD" id="cd21936">
    <property type="entry name" value="ZIP_TSC22D"/>
    <property type="match status" value="1"/>
</dbReference>
<dbReference type="Gene3D" id="1.20.5.490">
    <property type="entry name" value="Single helix bin"/>
    <property type="match status" value="1"/>
</dbReference>
<dbReference type="InterPro" id="IPR000580">
    <property type="entry name" value="TSC22/Bun"/>
</dbReference>
<dbReference type="InterPro" id="IPR047862">
    <property type="entry name" value="TSC22/BUN_CS"/>
</dbReference>
<dbReference type="PANTHER" id="PTHR46745">
    <property type="entry name" value="TSC22 DOMAIN FAMILY PROTEIN 1"/>
    <property type="match status" value="1"/>
</dbReference>
<dbReference type="PANTHER" id="PTHR46745:SF1">
    <property type="entry name" value="TSC22 DOMAIN FAMILY PROTEIN 1"/>
    <property type="match status" value="1"/>
</dbReference>
<dbReference type="Pfam" id="PF01166">
    <property type="entry name" value="TSC22"/>
    <property type="match status" value="1"/>
</dbReference>
<dbReference type="SUPFAM" id="SSF58026">
    <property type="entry name" value="Delta-sleep-inducing peptide immunoreactive peptide"/>
    <property type="match status" value="1"/>
</dbReference>
<dbReference type="PROSITE" id="PS01289">
    <property type="entry name" value="TSC22"/>
    <property type="match status" value="1"/>
</dbReference>
<organism>
    <name type="scientific">Drosophila melanogaster</name>
    <name type="common">Fruit fly</name>
    <dbReference type="NCBI Taxonomy" id="7227"/>
    <lineage>
        <taxon>Eukaryota</taxon>
        <taxon>Metazoa</taxon>
        <taxon>Ecdysozoa</taxon>
        <taxon>Arthropoda</taxon>
        <taxon>Hexapoda</taxon>
        <taxon>Insecta</taxon>
        <taxon>Pterygota</taxon>
        <taxon>Neoptera</taxon>
        <taxon>Endopterygota</taxon>
        <taxon>Diptera</taxon>
        <taxon>Brachycera</taxon>
        <taxon>Muscomorpha</taxon>
        <taxon>Ephydroidea</taxon>
        <taxon>Drosophilidae</taxon>
        <taxon>Drosophila</taxon>
        <taxon>Sophophora</taxon>
    </lineage>
</organism>
<reference key="1">
    <citation type="journal article" date="1995" name="Development">
        <title>Shortsighted acts in the decapentaplegic pathway in Drosophila eye development and has homology to a mouse TGF-beta-responsive gene.</title>
        <authorList>
            <person name="Treisman J.E."/>
            <person name="Lai Z.-C."/>
            <person name="Rubin G.M."/>
        </authorList>
    </citation>
    <scope>NUCLEOTIDE SEQUENCE [MRNA] (ISOFORM CLASS 2)</scope>
    <scope>FUNCTION</scope>
    <scope>SUBCELLULAR LOCATION</scope>
    <source>
        <tissue>Eye-antennal disk</tissue>
    </source>
</reference>
<reference key="2">
    <citation type="journal article" date="2000" name="Science">
        <title>The genome sequence of Drosophila melanogaster.</title>
        <authorList>
            <person name="Adams M.D."/>
            <person name="Celniker S.E."/>
            <person name="Holt R.A."/>
            <person name="Evans C.A."/>
            <person name="Gocayne J.D."/>
            <person name="Amanatides P.G."/>
            <person name="Scherer S.E."/>
            <person name="Li P.W."/>
            <person name="Hoskins R.A."/>
            <person name="Galle R.F."/>
            <person name="George R.A."/>
            <person name="Lewis S.E."/>
            <person name="Richards S."/>
            <person name="Ashburner M."/>
            <person name="Henderson S.N."/>
            <person name="Sutton G.G."/>
            <person name="Wortman J.R."/>
            <person name="Yandell M.D."/>
            <person name="Zhang Q."/>
            <person name="Chen L.X."/>
            <person name="Brandon R.C."/>
            <person name="Rogers Y.-H.C."/>
            <person name="Blazej R.G."/>
            <person name="Champe M."/>
            <person name="Pfeiffer B.D."/>
            <person name="Wan K.H."/>
            <person name="Doyle C."/>
            <person name="Baxter E.G."/>
            <person name="Helt G."/>
            <person name="Nelson C.R."/>
            <person name="Miklos G.L.G."/>
            <person name="Abril J.F."/>
            <person name="Agbayani A."/>
            <person name="An H.-J."/>
            <person name="Andrews-Pfannkoch C."/>
            <person name="Baldwin D."/>
            <person name="Ballew R.M."/>
            <person name="Basu A."/>
            <person name="Baxendale J."/>
            <person name="Bayraktaroglu L."/>
            <person name="Beasley E.M."/>
            <person name="Beeson K.Y."/>
            <person name="Benos P.V."/>
            <person name="Berman B.P."/>
            <person name="Bhandari D."/>
            <person name="Bolshakov S."/>
            <person name="Borkova D."/>
            <person name="Botchan M.R."/>
            <person name="Bouck J."/>
            <person name="Brokstein P."/>
            <person name="Brottier P."/>
            <person name="Burtis K.C."/>
            <person name="Busam D.A."/>
            <person name="Butler H."/>
            <person name="Cadieu E."/>
            <person name="Center A."/>
            <person name="Chandra I."/>
            <person name="Cherry J.M."/>
            <person name="Cawley S."/>
            <person name="Dahlke C."/>
            <person name="Davenport L.B."/>
            <person name="Davies P."/>
            <person name="de Pablos B."/>
            <person name="Delcher A."/>
            <person name="Deng Z."/>
            <person name="Mays A.D."/>
            <person name="Dew I."/>
            <person name="Dietz S.M."/>
            <person name="Dodson K."/>
            <person name="Doup L.E."/>
            <person name="Downes M."/>
            <person name="Dugan-Rocha S."/>
            <person name="Dunkov B.C."/>
            <person name="Dunn P."/>
            <person name="Durbin K.J."/>
            <person name="Evangelista C.C."/>
            <person name="Ferraz C."/>
            <person name="Ferriera S."/>
            <person name="Fleischmann W."/>
            <person name="Fosler C."/>
            <person name="Gabrielian A.E."/>
            <person name="Garg N.S."/>
            <person name="Gelbart W.M."/>
            <person name="Glasser K."/>
            <person name="Glodek A."/>
            <person name="Gong F."/>
            <person name="Gorrell J.H."/>
            <person name="Gu Z."/>
            <person name="Guan P."/>
            <person name="Harris M."/>
            <person name="Harris N.L."/>
            <person name="Harvey D.A."/>
            <person name="Heiman T.J."/>
            <person name="Hernandez J.R."/>
            <person name="Houck J."/>
            <person name="Hostin D."/>
            <person name="Houston K.A."/>
            <person name="Howland T.J."/>
            <person name="Wei M.-H."/>
            <person name="Ibegwam C."/>
            <person name="Jalali M."/>
            <person name="Kalush F."/>
            <person name="Karpen G.H."/>
            <person name="Ke Z."/>
            <person name="Kennison J.A."/>
            <person name="Ketchum K.A."/>
            <person name="Kimmel B.E."/>
            <person name="Kodira C.D."/>
            <person name="Kraft C.L."/>
            <person name="Kravitz S."/>
            <person name="Kulp D."/>
            <person name="Lai Z."/>
            <person name="Lasko P."/>
            <person name="Lei Y."/>
            <person name="Levitsky A.A."/>
            <person name="Li J.H."/>
            <person name="Li Z."/>
            <person name="Liang Y."/>
            <person name="Lin X."/>
            <person name="Liu X."/>
            <person name="Mattei B."/>
            <person name="McIntosh T.C."/>
            <person name="McLeod M.P."/>
            <person name="McPherson D."/>
            <person name="Merkulov G."/>
            <person name="Milshina N.V."/>
            <person name="Mobarry C."/>
            <person name="Morris J."/>
            <person name="Moshrefi A."/>
            <person name="Mount S.M."/>
            <person name="Moy M."/>
            <person name="Murphy B."/>
            <person name="Murphy L."/>
            <person name="Muzny D.M."/>
            <person name="Nelson D.L."/>
            <person name="Nelson D.R."/>
            <person name="Nelson K.A."/>
            <person name="Nixon K."/>
            <person name="Nusskern D.R."/>
            <person name="Pacleb J.M."/>
            <person name="Palazzolo M."/>
            <person name="Pittman G.S."/>
            <person name="Pan S."/>
            <person name="Pollard J."/>
            <person name="Puri V."/>
            <person name="Reese M.G."/>
            <person name="Reinert K."/>
            <person name="Remington K."/>
            <person name="Saunders R.D.C."/>
            <person name="Scheeler F."/>
            <person name="Shen H."/>
            <person name="Shue B.C."/>
            <person name="Siden-Kiamos I."/>
            <person name="Simpson M."/>
            <person name="Skupski M.P."/>
            <person name="Smith T.J."/>
            <person name="Spier E."/>
            <person name="Spradling A.C."/>
            <person name="Stapleton M."/>
            <person name="Strong R."/>
            <person name="Sun E."/>
            <person name="Svirskas R."/>
            <person name="Tector C."/>
            <person name="Turner R."/>
            <person name="Venter E."/>
            <person name="Wang A.H."/>
            <person name="Wang X."/>
            <person name="Wang Z.-Y."/>
            <person name="Wassarman D.A."/>
            <person name="Weinstock G.M."/>
            <person name="Weissenbach J."/>
            <person name="Williams S.M."/>
            <person name="Woodage T."/>
            <person name="Worley K.C."/>
            <person name="Wu D."/>
            <person name="Yang S."/>
            <person name="Yao Q.A."/>
            <person name="Ye J."/>
            <person name="Yeh R.-F."/>
            <person name="Zaveri J.S."/>
            <person name="Zhan M."/>
            <person name="Zhang G."/>
            <person name="Zhao Q."/>
            <person name="Zheng L."/>
            <person name="Zheng X.H."/>
            <person name="Zhong F.N."/>
            <person name="Zhong W."/>
            <person name="Zhou X."/>
            <person name="Zhu S.C."/>
            <person name="Zhu X."/>
            <person name="Smith H.O."/>
            <person name="Gibbs R.A."/>
            <person name="Myers E.W."/>
            <person name="Rubin G.M."/>
            <person name="Venter J.C."/>
        </authorList>
    </citation>
    <scope>NUCLEOTIDE SEQUENCE [LARGE SCALE GENOMIC DNA]</scope>
    <source>
        <strain>Berkeley</strain>
    </source>
</reference>
<reference key="3">
    <citation type="journal article" date="2002" name="Genome Biol.">
        <title>Annotation of the Drosophila melanogaster euchromatic genome: a systematic review.</title>
        <authorList>
            <person name="Misra S."/>
            <person name="Crosby M.A."/>
            <person name="Mungall C.J."/>
            <person name="Matthews B.B."/>
            <person name="Campbell K.S."/>
            <person name="Hradecky P."/>
            <person name="Huang Y."/>
            <person name="Kaminker J.S."/>
            <person name="Millburn G.H."/>
            <person name="Prochnik S.E."/>
            <person name="Smith C.D."/>
            <person name="Tupy J.L."/>
            <person name="Whitfield E.J."/>
            <person name="Bayraktaroglu L."/>
            <person name="Berman B.P."/>
            <person name="Bettencourt B.R."/>
            <person name="Celniker S.E."/>
            <person name="de Grey A.D.N.J."/>
            <person name="Drysdale R.A."/>
            <person name="Harris N.L."/>
            <person name="Richter J."/>
            <person name="Russo S."/>
            <person name="Schroeder A.J."/>
            <person name="Shu S.Q."/>
            <person name="Stapleton M."/>
            <person name="Yamada C."/>
            <person name="Ashburner M."/>
            <person name="Gelbart W.M."/>
            <person name="Rubin G.M."/>
            <person name="Lewis S.E."/>
        </authorList>
    </citation>
    <scope>GENOME REANNOTATION</scope>
    <source>
        <strain>Berkeley</strain>
    </source>
</reference>
<reference key="4">
    <citation type="submission" date="2010-03" db="EMBL/GenBank/DDBJ databases">
        <authorList>
            <person name="Carlson J."/>
            <person name="Booth B."/>
            <person name="Frise E."/>
            <person name="Park S."/>
            <person name="Wan K."/>
            <person name="Yu C."/>
            <person name="Celniker S."/>
        </authorList>
    </citation>
    <scope>NUCLEOTIDE SEQUENCE [LARGE SCALE MRNA] OF 462-1331 (ISOFORM F)</scope>
    <source>
        <strain>Berkeley</strain>
        <tissue>Testis</tissue>
    </source>
</reference>
<sequence>MFDRTVNAKFKPASSNAGPGNNPVRRNSMLTPSRGVTIGGTGGNIRKLTKVSSLTSNHHFAVCYPPSNIYQNSNNAGSNSALQRTTSESLRLNMMSRVAAGATPTTVSRASSNSSLATSTSTSLAPKSSSSSGGSNSTPQQQQQQLVSSNNSSSSSNNSFTKASSPNNNGARSVGGAATSAATGTTAAAGSHHHQPHHHHHHHHHHHQHHNHQQQQQQQTSLSQGHASLTVAGGSASAGGGGGGGSGSSSGTAAGGTNRKPKTTSSFEITSVTVGHPKLNAAGDTGDESADDLDESHTDDNSRITDLENETPSMSEDTFSKEEVYYANNALSTNAPVIPTSSQYGLVVVDPIAPSLGQTIQNVQVNVSDNIINVVSGAVTPGGTKKKDDIKETQHRSERFKVVKIESTEPFKRGRWMCMDYLDHSSVGNGGNNNEKTGSSTSEAHAATTDGGAAGVGAGSEAPAHKTTQSMILPPTQKLNENHLEANSTDANWNYAEQQQQQQQQQQQQQTIVGNALTKTLPVALRNVSRSSSVTRSPNATVEFLSPNLLAQQQQQQQQLFDSVNANAASSPNPAGDPNNMDYARTAAMQLHQTLQQLKQREDAMDVPPGAGGYANYQNGGDSAVGAASNNNSAAAATGESQLSTSYVEQQQQQQQPLSPAPLTPQAAPTFAAVAAGQSPNFQLEQQQQQQQATSQIDGIVPQPFNPQQQQQQTPQQSTAQQAAAAANATSAVTAPPPQQTSNTSNAAVTTGQGQTMPLLSHMTSYEQQQPNLGAAAAAAAAGGTAATSVAAPQAIPTLQLQSAPSTIADPQQLMVPQQQQQQQHQEEQQQQPQQQQQPLPPANIASASANNSNLNLTNTNVVATGEATTNALTLTDEQATAALAAAFATGAAAAATGATSAAAATQQQIQQLQQQPNAESETESFITASNPGGNRKRAFSNPHIGGPNDPSFMHRLNPQLYYYNKSQSGRSSFCVDESLWPTNNPNGAVSDTNLYMGSSTDEDYEEAIDQFSPTIYTTRSASRAIPIPNSAGSSPQHQMHHSQPRIAIGINQMEGGGPTRSTGAFSASPSIYAYPHSPFYASSPETSFGSAAMPGHPAASSRISFSYDPAFQRLQVPNASGDRRPRSPLECASVFAAVAAAATCGDAAGGAADTVISSASGTSAVAIDNKIEQAMDLVKSHLMIAVREEVEVLKERISELMDKINKLELENSILKSNIPQETLQQLQLQLQLAAPPATPAIQAAPAVQSVVAPAAAGQAVQQQAAGAVAVTGVATSPASAVVPTSIPNGSAENGSSAVESAAVSVEQQVQQVTSAAAAAASVVTANGPMS</sequence>
<gene>
    <name type="primary">bun</name>
    <name type="synonym">shs</name>
    <name type="ORF">CG42281</name>
</gene>